<evidence type="ECO:0000255" key="1">
    <source>
        <dbReference type="HAMAP-Rule" id="MF_00008"/>
    </source>
</evidence>
<dbReference type="EC" id="2.1.1.45" evidence="1"/>
<dbReference type="EMBL" id="AE016879">
    <property type="protein sequence ID" value="AAP26113.1"/>
    <property type="molecule type" value="Genomic_DNA"/>
</dbReference>
<dbReference type="EMBL" id="AE017334">
    <property type="protein sequence ID" value="AAT31356.1"/>
    <property type="molecule type" value="Genomic_DNA"/>
</dbReference>
<dbReference type="EMBL" id="AE017225">
    <property type="protein sequence ID" value="AAT54396.1"/>
    <property type="molecule type" value="Genomic_DNA"/>
</dbReference>
<dbReference type="RefSeq" id="NP_844627.1">
    <property type="nucleotide sequence ID" value="NC_003997.3"/>
</dbReference>
<dbReference type="RefSeq" id="WP_000679592.1">
    <property type="nucleotide sequence ID" value="NZ_WXXJ01000017.1"/>
</dbReference>
<dbReference type="RefSeq" id="YP_028345.1">
    <property type="nucleotide sequence ID" value="NC_005945.1"/>
</dbReference>
<dbReference type="SMR" id="Q81R23"/>
<dbReference type="STRING" id="261594.GBAA_2236"/>
<dbReference type="DNASU" id="1085458"/>
<dbReference type="GeneID" id="45022129"/>
<dbReference type="KEGG" id="ban:BA_2236"/>
<dbReference type="KEGG" id="bar:GBAA_2236"/>
<dbReference type="KEGG" id="bat:BAS2082"/>
<dbReference type="PATRIC" id="fig|198094.11.peg.2206"/>
<dbReference type="eggNOG" id="COG0207">
    <property type="taxonomic scope" value="Bacteria"/>
</dbReference>
<dbReference type="HOGENOM" id="CLU_021669_0_2_9"/>
<dbReference type="OMA" id="AYGRFWR"/>
<dbReference type="OrthoDB" id="9774633at2"/>
<dbReference type="UniPathway" id="UPA00575"/>
<dbReference type="Proteomes" id="UP000000427">
    <property type="component" value="Chromosome"/>
</dbReference>
<dbReference type="Proteomes" id="UP000000594">
    <property type="component" value="Chromosome"/>
</dbReference>
<dbReference type="GO" id="GO:0005829">
    <property type="term" value="C:cytosol"/>
    <property type="evidence" value="ECO:0007669"/>
    <property type="project" value="TreeGrafter"/>
</dbReference>
<dbReference type="GO" id="GO:0004799">
    <property type="term" value="F:thymidylate synthase activity"/>
    <property type="evidence" value="ECO:0007669"/>
    <property type="project" value="UniProtKB-UniRule"/>
</dbReference>
<dbReference type="GO" id="GO:0006231">
    <property type="term" value="P:dTMP biosynthetic process"/>
    <property type="evidence" value="ECO:0007669"/>
    <property type="project" value="UniProtKB-UniRule"/>
</dbReference>
<dbReference type="GO" id="GO:0006235">
    <property type="term" value="P:dTTP biosynthetic process"/>
    <property type="evidence" value="ECO:0007669"/>
    <property type="project" value="UniProtKB-UniRule"/>
</dbReference>
<dbReference type="GO" id="GO:0032259">
    <property type="term" value="P:methylation"/>
    <property type="evidence" value="ECO:0007669"/>
    <property type="project" value="UniProtKB-KW"/>
</dbReference>
<dbReference type="CDD" id="cd00351">
    <property type="entry name" value="TS_Pyrimidine_HMase"/>
    <property type="match status" value="1"/>
</dbReference>
<dbReference type="Gene3D" id="3.30.572.10">
    <property type="entry name" value="Thymidylate synthase/dCMP hydroxymethylase domain"/>
    <property type="match status" value="1"/>
</dbReference>
<dbReference type="HAMAP" id="MF_00008">
    <property type="entry name" value="Thymidy_synth_bact"/>
    <property type="match status" value="1"/>
</dbReference>
<dbReference type="InterPro" id="IPR045097">
    <property type="entry name" value="Thymidate_synth/dCMP_Mease"/>
</dbReference>
<dbReference type="InterPro" id="IPR023451">
    <property type="entry name" value="Thymidate_synth/dCMP_Mease_dom"/>
</dbReference>
<dbReference type="InterPro" id="IPR036926">
    <property type="entry name" value="Thymidate_synth/dCMP_Mease_sf"/>
</dbReference>
<dbReference type="InterPro" id="IPR000398">
    <property type="entry name" value="Thymidylate_synthase"/>
</dbReference>
<dbReference type="InterPro" id="IPR020940">
    <property type="entry name" value="Thymidylate_synthase_AS"/>
</dbReference>
<dbReference type="NCBIfam" id="NF002496">
    <property type="entry name" value="PRK01827.1-2"/>
    <property type="match status" value="1"/>
</dbReference>
<dbReference type="NCBIfam" id="TIGR03284">
    <property type="entry name" value="thym_sym"/>
    <property type="match status" value="1"/>
</dbReference>
<dbReference type="PANTHER" id="PTHR11548:SF9">
    <property type="entry name" value="THYMIDYLATE SYNTHASE"/>
    <property type="match status" value="1"/>
</dbReference>
<dbReference type="PANTHER" id="PTHR11548">
    <property type="entry name" value="THYMIDYLATE SYNTHASE 1"/>
    <property type="match status" value="1"/>
</dbReference>
<dbReference type="Pfam" id="PF00303">
    <property type="entry name" value="Thymidylat_synt"/>
    <property type="match status" value="1"/>
</dbReference>
<dbReference type="PRINTS" id="PR00108">
    <property type="entry name" value="THYMDSNTHASE"/>
</dbReference>
<dbReference type="SUPFAM" id="SSF55831">
    <property type="entry name" value="Thymidylate synthase/dCMP hydroxymethylase"/>
    <property type="match status" value="1"/>
</dbReference>
<dbReference type="PROSITE" id="PS00091">
    <property type="entry name" value="THYMIDYLATE_SYNTHASE"/>
    <property type="match status" value="1"/>
</dbReference>
<protein>
    <recommendedName>
        <fullName evidence="1">Thymidylate synthase</fullName>
        <shortName evidence="1">TS</shortName>
        <shortName evidence="1">TSase</shortName>
        <ecNumber evidence="1">2.1.1.45</ecNumber>
    </recommendedName>
</protein>
<gene>
    <name evidence="1" type="primary">thyA</name>
    <name type="ordered locus">BA_2236</name>
    <name type="ordered locus">GBAA_2236</name>
    <name type="ordered locus">BAS2082</name>
</gene>
<feature type="chain" id="PRO_0000140916" description="Thymidylate synthase">
    <location>
        <begin position="1"/>
        <end position="318"/>
    </location>
</feature>
<feature type="active site" description="Nucleophile" evidence="1">
    <location>
        <position position="200"/>
    </location>
</feature>
<feature type="binding site" description="in other chain" evidence="1">
    <location>
        <position position="25"/>
    </location>
    <ligand>
        <name>dUMP</name>
        <dbReference type="ChEBI" id="CHEBI:246422"/>
        <note>ligand shared between dimeric partners</note>
    </ligand>
</feature>
<feature type="binding site" evidence="1">
    <location>
        <begin position="180"/>
        <end position="181"/>
    </location>
    <ligand>
        <name>dUMP</name>
        <dbReference type="ChEBI" id="CHEBI:246422"/>
        <note>ligand shared between dimeric partners</note>
    </ligand>
</feature>
<feature type="binding site" description="in other chain" evidence="1">
    <location>
        <begin position="220"/>
        <end position="223"/>
    </location>
    <ligand>
        <name>dUMP</name>
        <dbReference type="ChEBI" id="CHEBI:246422"/>
        <note>ligand shared between dimeric partners</note>
    </ligand>
</feature>
<feature type="binding site" evidence="1">
    <location>
        <position position="223"/>
    </location>
    <ligand>
        <name>(6R)-5,10-methylene-5,6,7,8-tetrahydrofolate</name>
        <dbReference type="ChEBI" id="CHEBI:15636"/>
    </ligand>
</feature>
<feature type="binding site" description="in other chain" evidence="1">
    <location>
        <position position="231"/>
    </location>
    <ligand>
        <name>dUMP</name>
        <dbReference type="ChEBI" id="CHEBI:246422"/>
        <note>ligand shared between dimeric partners</note>
    </ligand>
</feature>
<feature type="binding site" description="in other chain" evidence="1">
    <location>
        <begin position="261"/>
        <end position="263"/>
    </location>
    <ligand>
        <name>dUMP</name>
        <dbReference type="ChEBI" id="CHEBI:246422"/>
        <note>ligand shared between dimeric partners</note>
    </ligand>
</feature>
<feature type="binding site" evidence="1">
    <location>
        <position position="317"/>
    </location>
    <ligand>
        <name>(6R)-5,10-methylene-5,6,7,8-tetrahydrofolate</name>
        <dbReference type="ChEBI" id="CHEBI:15636"/>
    </ligand>
</feature>
<name>TYSY_BACAN</name>
<sequence length="318" mass="36893">MKHAENEYLNLCRHVMEHGTKKEDRTGTGTVSVFGYQMRFDLSKGFPLLTTKRVPFRLVASELLWFMKGDTNIRYLLQHNNNIWNEWAFKSWVESDEYTGPDMIDFGLRSQQDEEFKVQYDEQMELFKKNVLEDDEFSNKYGYLGDVYGKQWRAWKTTAGETLDQLKDVIEMIKKTPDSRRLIVSAWNPEDVPSMALPPCHTLFQFYVADGKLSCQLYQRSGDIFLGIPFNIASYSLLTHLIAHECGLEVGEFVHTIGDAHIYTNHFEQVEKQLAREPRPFPKLTLNPDVKSVFDFEMEDLTIEGYDPHPAIKAPVAV</sequence>
<accession>Q81R23</accession>
<accession>Q6HZ93</accession>
<accession>Q6KT87</accession>
<comment type="function">
    <text evidence="1">Catalyzes the reductive methylation of 2'-deoxyuridine-5'-monophosphate (dUMP) to 2'-deoxythymidine-5'-monophosphate (dTMP) while utilizing 5,10-methylenetetrahydrofolate (mTHF) as the methyl donor and reductant in the reaction, yielding dihydrofolate (DHF) as a by-product. This enzymatic reaction provides an intracellular de novo source of dTMP, an essential precursor for DNA biosynthesis.</text>
</comment>
<comment type="catalytic activity">
    <reaction evidence="1">
        <text>dUMP + (6R)-5,10-methylene-5,6,7,8-tetrahydrofolate = 7,8-dihydrofolate + dTMP</text>
        <dbReference type="Rhea" id="RHEA:12104"/>
        <dbReference type="ChEBI" id="CHEBI:15636"/>
        <dbReference type="ChEBI" id="CHEBI:57451"/>
        <dbReference type="ChEBI" id="CHEBI:63528"/>
        <dbReference type="ChEBI" id="CHEBI:246422"/>
        <dbReference type="EC" id="2.1.1.45"/>
    </reaction>
</comment>
<comment type="pathway">
    <text evidence="1">Pyrimidine metabolism; dTTP biosynthesis.</text>
</comment>
<comment type="subunit">
    <text evidence="1">Homodimer.</text>
</comment>
<comment type="subcellular location">
    <subcellularLocation>
        <location evidence="1">Cytoplasm</location>
    </subcellularLocation>
</comment>
<comment type="similarity">
    <text evidence="1">Belongs to the thymidylate synthase family. Bacterial-type ThyA subfamily.</text>
</comment>
<organism>
    <name type="scientific">Bacillus anthracis</name>
    <dbReference type="NCBI Taxonomy" id="1392"/>
    <lineage>
        <taxon>Bacteria</taxon>
        <taxon>Bacillati</taxon>
        <taxon>Bacillota</taxon>
        <taxon>Bacilli</taxon>
        <taxon>Bacillales</taxon>
        <taxon>Bacillaceae</taxon>
        <taxon>Bacillus</taxon>
        <taxon>Bacillus cereus group</taxon>
    </lineage>
</organism>
<keyword id="KW-0963">Cytoplasm</keyword>
<keyword id="KW-0489">Methyltransferase</keyword>
<keyword id="KW-0545">Nucleotide biosynthesis</keyword>
<keyword id="KW-1185">Reference proteome</keyword>
<keyword id="KW-0808">Transferase</keyword>
<reference key="1">
    <citation type="journal article" date="2003" name="Nature">
        <title>The genome sequence of Bacillus anthracis Ames and comparison to closely related bacteria.</title>
        <authorList>
            <person name="Read T.D."/>
            <person name="Peterson S.N."/>
            <person name="Tourasse N.J."/>
            <person name="Baillie L.W."/>
            <person name="Paulsen I.T."/>
            <person name="Nelson K.E."/>
            <person name="Tettelin H."/>
            <person name="Fouts D.E."/>
            <person name="Eisen J.A."/>
            <person name="Gill S.R."/>
            <person name="Holtzapple E.K."/>
            <person name="Okstad O.A."/>
            <person name="Helgason E."/>
            <person name="Rilstone J."/>
            <person name="Wu M."/>
            <person name="Kolonay J.F."/>
            <person name="Beanan M.J."/>
            <person name="Dodson R.J."/>
            <person name="Brinkac L.M."/>
            <person name="Gwinn M.L."/>
            <person name="DeBoy R.T."/>
            <person name="Madpu R."/>
            <person name="Daugherty S.C."/>
            <person name="Durkin A.S."/>
            <person name="Haft D.H."/>
            <person name="Nelson W.C."/>
            <person name="Peterson J.D."/>
            <person name="Pop M."/>
            <person name="Khouri H.M."/>
            <person name="Radune D."/>
            <person name="Benton J.L."/>
            <person name="Mahamoud Y."/>
            <person name="Jiang L."/>
            <person name="Hance I.R."/>
            <person name="Weidman J.F."/>
            <person name="Berry K.J."/>
            <person name="Plaut R.D."/>
            <person name="Wolf A.M."/>
            <person name="Watkins K.L."/>
            <person name="Nierman W.C."/>
            <person name="Hazen A."/>
            <person name="Cline R.T."/>
            <person name="Redmond C."/>
            <person name="Thwaite J.E."/>
            <person name="White O."/>
            <person name="Salzberg S.L."/>
            <person name="Thomason B."/>
            <person name="Friedlander A.M."/>
            <person name="Koehler T.M."/>
            <person name="Hanna P.C."/>
            <person name="Kolstoe A.-B."/>
            <person name="Fraser C.M."/>
        </authorList>
    </citation>
    <scope>NUCLEOTIDE SEQUENCE [LARGE SCALE GENOMIC DNA]</scope>
    <source>
        <strain>Ames / isolate Porton</strain>
    </source>
</reference>
<reference key="2">
    <citation type="journal article" date="2009" name="J. Bacteriol.">
        <title>The complete genome sequence of Bacillus anthracis Ames 'Ancestor'.</title>
        <authorList>
            <person name="Ravel J."/>
            <person name="Jiang L."/>
            <person name="Stanley S.T."/>
            <person name="Wilson M.R."/>
            <person name="Decker R.S."/>
            <person name="Read T.D."/>
            <person name="Worsham P."/>
            <person name="Keim P.S."/>
            <person name="Salzberg S.L."/>
            <person name="Fraser-Liggett C.M."/>
            <person name="Rasko D.A."/>
        </authorList>
    </citation>
    <scope>NUCLEOTIDE SEQUENCE [LARGE SCALE GENOMIC DNA]</scope>
    <source>
        <strain>Ames ancestor</strain>
    </source>
</reference>
<reference key="3">
    <citation type="submission" date="2004-01" db="EMBL/GenBank/DDBJ databases">
        <title>Complete genome sequence of Bacillus anthracis Sterne.</title>
        <authorList>
            <person name="Brettin T.S."/>
            <person name="Bruce D."/>
            <person name="Challacombe J.F."/>
            <person name="Gilna P."/>
            <person name="Han C."/>
            <person name="Hill K."/>
            <person name="Hitchcock P."/>
            <person name="Jackson P."/>
            <person name="Keim P."/>
            <person name="Longmire J."/>
            <person name="Lucas S."/>
            <person name="Okinaka R."/>
            <person name="Richardson P."/>
            <person name="Rubin E."/>
            <person name="Tice H."/>
        </authorList>
    </citation>
    <scope>NUCLEOTIDE SEQUENCE [LARGE SCALE GENOMIC DNA]</scope>
    <source>
        <strain>Sterne</strain>
    </source>
</reference>
<proteinExistence type="inferred from homology"/>